<accession>Q0HTT0</accession>
<proteinExistence type="inferred from homology"/>
<evidence type="ECO:0000255" key="1">
    <source>
        <dbReference type="HAMAP-Rule" id="MF_01187"/>
    </source>
</evidence>
<organism>
    <name type="scientific">Shewanella sp. (strain MR-7)</name>
    <dbReference type="NCBI Taxonomy" id="60481"/>
    <lineage>
        <taxon>Bacteria</taxon>
        <taxon>Pseudomonadati</taxon>
        <taxon>Pseudomonadota</taxon>
        <taxon>Gammaproteobacteria</taxon>
        <taxon>Alteromonadales</taxon>
        <taxon>Shewanellaceae</taxon>
        <taxon>Shewanella</taxon>
    </lineage>
</organism>
<gene>
    <name type="ordered locus">Shewmr7_2490</name>
</gene>
<comment type="similarity">
    <text evidence="1">Belongs to the UPF0434 family.</text>
</comment>
<dbReference type="EMBL" id="CP000444">
    <property type="protein sequence ID" value="ABI43475.1"/>
    <property type="molecule type" value="Genomic_DNA"/>
</dbReference>
<dbReference type="SMR" id="Q0HTT0"/>
<dbReference type="KEGG" id="shm:Shewmr7_2490"/>
<dbReference type="HOGENOM" id="CLU_155659_3_1_6"/>
<dbReference type="GO" id="GO:0005829">
    <property type="term" value="C:cytosol"/>
    <property type="evidence" value="ECO:0007669"/>
    <property type="project" value="TreeGrafter"/>
</dbReference>
<dbReference type="FunFam" id="2.20.25.10:FF:000002">
    <property type="entry name" value="UPF0434 protein YcaR"/>
    <property type="match status" value="1"/>
</dbReference>
<dbReference type="Gene3D" id="2.20.25.10">
    <property type="match status" value="1"/>
</dbReference>
<dbReference type="HAMAP" id="MF_01187">
    <property type="entry name" value="UPF0434"/>
    <property type="match status" value="1"/>
</dbReference>
<dbReference type="InterPro" id="IPR005651">
    <property type="entry name" value="Trm112-like"/>
</dbReference>
<dbReference type="PANTHER" id="PTHR33505:SF4">
    <property type="entry name" value="PROTEIN PREY, MITOCHONDRIAL"/>
    <property type="match status" value="1"/>
</dbReference>
<dbReference type="PANTHER" id="PTHR33505">
    <property type="entry name" value="ZGC:162634"/>
    <property type="match status" value="1"/>
</dbReference>
<dbReference type="Pfam" id="PF03966">
    <property type="entry name" value="Trm112p"/>
    <property type="match status" value="1"/>
</dbReference>
<dbReference type="SUPFAM" id="SSF158997">
    <property type="entry name" value="Trm112p-like"/>
    <property type="match status" value="1"/>
</dbReference>
<name>Y2490_SHESR</name>
<protein>
    <recommendedName>
        <fullName evidence="1">UPF0434 protein Shewmr7_2490</fullName>
    </recommendedName>
</protein>
<feature type="chain" id="PRO_0000291169" description="UPF0434 protein Shewmr7_2490">
    <location>
        <begin position="1"/>
        <end position="59"/>
    </location>
</feature>
<sequence length="59" mass="6519">MAFDKKLLDIVACPVCKGKLEYDKTTQQLICKADKLAYPITDGIPVLLENRAVPLNEAV</sequence>
<reference key="1">
    <citation type="submission" date="2006-08" db="EMBL/GenBank/DDBJ databases">
        <title>Complete sequence of chromosome 1 of Shewanella sp. MR-7.</title>
        <authorList>
            <person name="Copeland A."/>
            <person name="Lucas S."/>
            <person name="Lapidus A."/>
            <person name="Barry K."/>
            <person name="Detter J.C."/>
            <person name="Glavina del Rio T."/>
            <person name="Hammon N."/>
            <person name="Israni S."/>
            <person name="Dalin E."/>
            <person name="Tice H."/>
            <person name="Pitluck S."/>
            <person name="Kiss H."/>
            <person name="Brettin T."/>
            <person name="Bruce D."/>
            <person name="Han C."/>
            <person name="Tapia R."/>
            <person name="Gilna P."/>
            <person name="Schmutz J."/>
            <person name="Larimer F."/>
            <person name="Land M."/>
            <person name="Hauser L."/>
            <person name="Kyrpides N."/>
            <person name="Mikhailova N."/>
            <person name="Nealson K."/>
            <person name="Konstantinidis K."/>
            <person name="Klappenbach J."/>
            <person name="Tiedje J."/>
            <person name="Richardson P."/>
        </authorList>
    </citation>
    <scope>NUCLEOTIDE SEQUENCE [LARGE SCALE GENOMIC DNA]</scope>
    <source>
        <strain>MR-7</strain>
    </source>
</reference>